<accession>A4JA69</accession>
<protein>
    <recommendedName>
        <fullName evidence="1">Glycine dehydrogenase (decarboxylating)</fullName>
        <ecNumber evidence="1">1.4.4.2</ecNumber>
    </recommendedName>
    <alternativeName>
        <fullName evidence="1">Glycine cleavage system P-protein</fullName>
    </alternativeName>
    <alternativeName>
        <fullName evidence="1">Glycine decarboxylase</fullName>
    </alternativeName>
    <alternativeName>
        <fullName evidence="1">Glycine dehydrogenase (aminomethyl-transferring)</fullName>
    </alternativeName>
</protein>
<gene>
    <name evidence="1" type="primary">gcvP</name>
    <name type="ordered locus">Bcep1808_0149</name>
</gene>
<keyword id="KW-0560">Oxidoreductase</keyword>
<keyword id="KW-0663">Pyridoxal phosphate</keyword>
<reference key="1">
    <citation type="submission" date="2007-03" db="EMBL/GenBank/DDBJ databases">
        <title>Complete sequence of chromosome 1 of Burkholderia vietnamiensis G4.</title>
        <authorList>
            <consortium name="US DOE Joint Genome Institute"/>
            <person name="Copeland A."/>
            <person name="Lucas S."/>
            <person name="Lapidus A."/>
            <person name="Barry K."/>
            <person name="Detter J.C."/>
            <person name="Glavina del Rio T."/>
            <person name="Hammon N."/>
            <person name="Israni S."/>
            <person name="Dalin E."/>
            <person name="Tice H."/>
            <person name="Pitluck S."/>
            <person name="Chain P."/>
            <person name="Malfatti S."/>
            <person name="Shin M."/>
            <person name="Vergez L."/>
            <person name="Schmutz J."/>
            <person name="Larimer F."/>
            <person name="Land M."/>
            <person name="Hauser L."/>
            <person name="Kyrpides N."/>
            <person name="Tiedje J."/>
            <person name="Richardson P."/>
        </authorList>
    </citation>
    <scope>NUCLEOTIDE SEQUENCE [LARGE SCALE GENOMIC DNA]</scope>
    <source>
        <strain>G4 / LMG 22486</strain>
    </source>
</reference>
<sequence>MKHEHPDRLMNRTPLSLAALETHDAFAERHIGPDAASQQAMLDTLGFASRAALIDAVIPASIRRAEALPLGPFAQPKSEAEALAALRALADKNQVFRSYIGQGYYDSHTPAVILRNVLENPAWYTAYTPYQPEISQGRLEALLNFQQMVVDLTGLAISNASLLDEATAAAEAMTLLQRTGKPKSNVFYVADDVLPQTLEVVRTRALPIGIEVKTGPAAEAAQAGAFGVLLQYPGVNGDVRDYRALTDAIHAAGGHVVVAADLLALTVLTPPGEWGADVAVGNTQRFGVPMGFGGPHAAYMAVRDEFKRQMPGRLVGVTVDAQGKPALRLALQTREQHIRREKATSNVCTAQALLAIMASMYAVYHGPHGLKTIALRVNRIAALLAAGVKQLGFTTVNDTFFDTLTIDAGARTAQLHAFANAKRINLRRVSDTQVGVSVDETTTRDDLADLLAVFAQAAGGTAPDVDALDAGLPGVAALPAGLERTSAYLTHHVFNRHHSETEMLRYLRSLSDKDLALDRSMIPLGSCTMKLNATSEMLPVTWPEFGRIHPFAPSEQTAGYREMIDQLEQMLVAATGYAAVSLQPNAGSQGEYAGLLVIHAYHASRGEAHRDVCLIPASAHGTNPASAHMAGMKVVVVACDAQGNVDIADLKAKAEQHANDLAAIMITYPSTHGVFEQNVREICEIVHAHGGQVYVDGANMNAMVGLTAPGQFGGDVSHLNLHKTFCIPHGGGGPGVGPVAVGPHLAKFLPNQRSTGYARGEEGIGAVSAAPYGSASILPISWMYIAMMGAKNLTAATETAILNANYIAKRLAPHYPVLYSGPGGLVAHECILDLRPIKETSGITVDDVAKRLMDYGFHAPTMSFPVPGTLMVEPTESESQEELDRFIAAMIAIREEIRAVEEGRADREDNPLRHAPHTAAVVTANEWPHAYSREQAAYPVASLVTNKYWPPVGRADNAYGDRNLFCSCVPMSEYA</sequence>
<evidence type="ECO:0000255" key="1">
    <source>
        <dbReference type="HAMAP-Rule" id="MF_00711"/>
    </source>
</evidence>
<organism>
    <name type="scientific">Burkholderia vietnamiensis (strain G4 / LMG 22486)</name>
    <name type="common">Burkholderia cepacia (strain R1808)</name>
    <dbReference type="NCBI Taxonomy" id="269482"/>
    <lineage>
        <taxon>Bacteria</taxon>
        <taxon>Pseudomonadati</taxon>
        <taxon>Pseudomonadota</taxon>
        <taxon>Betaproteobacteria</taxon>
        <taxon>Burkholderiales</taxon>
        <taxon>Burkholderiaceae</taxon>
        <taxon>Burkholderia</taxon>
        <taxon>Burkholderia cepacia complex</taxon>
    </lineage>
</organism>
<comment type="function">
    <text evidence="1">The glycine cleavage system catalyzes the degradation of glycine. The P protein binds the alpha-amino group of glycine through its pyridoxal phosphate cofactor; CO(2) is released and the remaining methylamine moiety is then transferred to the lipoamide cofactor of the H protein.</text>
</comment>
<comment type="catalytic activity">
    <reaction evidence="1">
        <text>N(6)-[(R)-lipoyl]-L-lysyl-[glycine-cleavage complex H protein] + glycine + H(+) = N(6)-[(R)-S(8)-aminomethyldihydrolipoyl]-L-lysyl-[glycine-cleavage complex H protein] + CO2</text>
        <dbReference type="Rhea" id="RHEA:24304"/>
        <dbReference type="Rhea" id="RHEA-COMP:10494"/>
        <dbReference type="Rhea" id="RHEA-COMP:10495"/>
        <dbReference type="ChEBI" id="CHEBI:15378"/>
        <dbReference type="ChEBI" id="CHEBI:16526"/>
        <dbReference type="ChEBI" id="CHEBI:57305"/>
        <dbReference type="ChEBI" id="CHEBI:83099"/>
        <dbReference type="ChEBI" id="CHEBI:83143"/>
        <dbReference type="EC" id="1.4.4.2"/>
    </reaction>
</comment>
<comment type="cofactor">
    <cofactor evidence="1">
        <name>pyridoxal 5'-phosphate</name>
        <dbReference type="ChEBI" id="CHEBI:597326"/>
    </cofactor>
</comment>
<comment type="subunit">
    <text evidence="1">The glycine cleavage system is composed of four proteins: P, T, L and H.</text>
</comment>
<comment type="similarity">
    <text evidence="1">Belongs to the GcvP family.</text>
</comment>
<name>GCSP_BURVG</name>
<dbReference type="EC" id="1.4.4.2" evidence="1"/>
<dbReference type="EMBL" id="CP000614">
    <property type="protein sequence ID" value="ABO53172.1"/>
    <property type="molecule type" value="Genomic_DNA"/>
</dbReference>
<dbReference type="SMR" id="A4JA69"/>
<dbReference type="KEGG" id="bvi:Bcep1808_0149"/>
<dbReference type="eggNOG" id="COG0403">
    <property type="taxonomic scope" value="Bacteria"/>
</dbReference>
<dbReference type="eggNOG" id="COG1003">
    <property type="taxonomic scope" value="Bacteria"/>
</dbReference>
<dbReference type="HOGENOM" id="CLU_004620_2_1_4"/>
<dbReference type="Proteomes" id="UP000002287">
    <property type="component" value="Chromosome 1"/>
</dbReference>
<dbReference type="GO" id="GO:0005829">
    <property type="term" value="C:cytosol"/>
    <property type="evidence" value="ECO:0007669"/>
    <property type="project" value="TreeGrafter"/>
</dbReference>
<dbReference type="GO" id="GO:0005960">
    <property type="term" value="C:glycine cleavage complex"/>
    <property type="evidence" value="ECO:0007669"/>
    <property type="project" value="TreeGrafter"/>
</dbReference>
<dbReference type="GO" id="GO:0016594">
    <property type="term" value="F:glycine binding"/>
    <property type="evidence" value="ECO:0007669"/>
    <property type="project" value="TreeGrafter"/>
</dbReference>
<dbReference type="GO" id="GO:0004375">
    <property type="term" value="F:glycine dehydrogenase (decarboxylating) activity"/>
    <property type="evidence" value="ECO:0007669"/>
    <property type="project" value="UniProtKB-EC"/>
</dbReference>
<dbReference type="GO" id="GO:0030170">
    <property type="term" value="F:pyridoxal phosphate binding"/>
    <property type="evidence" value="ECO:0007669"/>
    <property type="project" value="TreeGrafter"/>
</dbReference>
<dbReference type="GO" id="GO:0019464">
    <property type="term" value="P:glycine decarboxylation via glycine cleavage system"/>
    <property type="evidence" value="ECO:0007669"/>
    <property type="project" value="UniProtKB-UniRule"/>
</dbReference>
<dbReference type="CDD" id="cd00613">
    <property type="entry name" value="GDC-P"/>
    <property type="match status" value="2"/>
</dbReference>
<dbReference type="FunFam" id="3.40.640.10:FF:000005">
    <property type="entry name" value="Glycine dehydrogenase (decarboxylating), mitochondrial"/>
    <property type="match status" value="1"/>
</dbReference>
<dbReference type="FunFam" id="3.90.1150.10:FF:000007">
    <property type="entry name" value="Glycine dehydrogenase (decarboxylating), mitochondrial"/>
    <property type="match status" value="1"/>
</dbReference>
<dbReference type="FunFam" id="3.40.640.10:FF:000007">
    <property type="entry name" value="glycine dehydrogenase (Decarboxylating), mitochondrial"/>
    <property type="match status" value="1"/>
</dbReference>
<dbReference type="Gene3D" id="3.90.1150.10">
    <property type="entry name" value="Aspartate Aminotransferase, domain 1"/>
    <property type="match status" value="2"/>
</dbReference>
<dbReference type="Gene3D" id="3.40.640.10">
    <property type="entry name" value="Type I PLP-dependent aspartate aminotransferase-like (Major domain)"/>
    <property type="match status" value="2"/>
</dbReference>
<dbReference type="HAMAP" id="MF_00711">
    <property type="entry name" value="GcvP"/>
    <property type="match status" value="1"/>
</dbReference>
<dbReference type="InterPro" id="IPR003437">
    <property type="entry name" value="GcvP"/>
</dbReference>
<dbReference type="InterPro" id="IPR049316">
    <property type="entry name" value="GDC-P_C"/>
</dbReference>
<dbReference type="InterPro" id="IPR049315">
    <property type="entry name" value="GDC-P_N"/>
</dbReference>
<dbReference type="InterPro" id="IPR020581">
    <property type="entry name" value="GDC_P"/>
</dbReference>
<dbReference type="InterPro" id="IPR015424">
    <property type="entry name" value="PyrdxlP-dep_Trfase"/>
</dbReference>
<dbReference type="InterPro" id="IPR015421">
    <property type="entry name" value="PyrdxlP-dep_Trfase_major"/>
</dbReference>
<dbReference type="InterPro" id="IPR015422">
    <property type="entry name" value="PyrdxlP-dep_Trfase_small"/>
</dbReference>
<dbReference type="NCBIfam" id="TIGR00461">
    <property type="entry name" value="gcvP"/>
    <property type="match status" value="1"/>
</dbReference>
<dbReference type="NCBIfam" id="NF003346">
    <property type="entry name" value="PRK04366.1"/>
    <property type="match status" value="1"/>
</dbReference>
<dbReference type="PANTHER" id="PTHR11773:SF1">
    <property type="entry name" value="GLYCINE DEHYDROGENASE (DECARBOXYLATING), MITOCHONDRIAL"/>
    <property type="match status" value="1"/>
</dbReference>
<dbReference type="PANTHER" id="PTHR11773">
    <property type="entry name" value="GLYCINE DEHYDROGENASE, DECARBOXYLATING"/>
    <property type="match status" value="1"/>
</dbReference>
<dbReference type="Pfam" id="PF21478">
    <property type="entry name" value="GcvP2_C"/>
    <property type="match status" value="1"/>
</dbReference>
<dbReference type="Pfam" id="PF02347">
    <property type="entry name" value="GDC-P"/>
    <property type="match status" value="2"/>
</dbReference>
<dbReference type="SUPFAM" id="SSF53383">
    <property type="entry name" value="PLP-dependent transferases"/>
    <property type="match status" value="2"/>
</dbReference>
<feature type="chain" id="PRO_1000045577" description="Glycine dehydrogenase (decarboxylating)">
    <location>
        <begin position="1"/>
        <end position="975"/>
    </location>
</feature>
<feature type="modified residue" description="N6-(pyridoxal phosphate)lysine" evidence="1">
    <location>
        <position position="723"/>
    </location>
</feature>
<proteinExistence type="inferred from homology"/>